<proteinExistence type="inferred from homology"/>
<organism>
    <name type="scientific">Streptococcus gordonii (strain Challis / ATCC 35105 / BCRC 15272 / CH1 / DL1 / V288)</name>
    <dbReference type="NCBI Taxonomy" id="467705"/>
    <lineage>
        <taxon>Bacteria</taxon>
        <taxon>Bacillati</taxon>
        <taxon>Bacillota</taxon>
        <taxon>Bacilli</taxon>
        <taxon>Lactobacillales</taxon>
        <taxon>Streptococcaceae</taxon>
        <taxon>Streptococcus</taxon>
    </lineage>
</organism>
<dbReference type="EMBL" id="CP000725">
    <property type="protein sequence ID" value="ABV09812.1"/>
    <property type="molecule type" value="Genomic_DNA"/>
</dbReference>
<dbReference type="RefSeq" id="WP_012000106.1">
    <property type="nucleotide sequence ID" value="NC_009785.1"/>
</dbReference>
<dbReference type="SMR" id="A8AVW9"/>
<dbReference type="STRING" id="467705.SGO_0626"/>
<dbReference type="KEGG" id="sgo:SGO_0626"/>
<dbReference type="eggNOG" id="COG2137">
    <property type="taxonomic scope" value="Bacteria"/>
</dbReference>
<dbReference type="HOGENOM" id="CLU_066607_4_0_9"/>
<dbReference type="Proteomes" id="UP000001131">
    <property type="component" value="Chromosome"/>
</dbReference>
<dbReference type="GO" id="GO:0005737">
    <property type="term" value="C:cytoplasm"/>
    <property type="evidence" value="ECO:0007669"/>
    <property type="project" value="UniProtKB-SubCell"/>
</dbReference>
<dbReference type="GO" id="GO:0006282">
    <property type="term" value="P:regulation of DNA repair"/>
    <property type="evidence" value="ECO:0007669"/>
    <property type="project" value="UniProtKB-UniRule"/>
</dbReference>
<dbReference type="Gene3D" id="1.10.10.10">
    <property type="entry name" value="Winged helix-like DNA-binding domain superfamily/Winged helix DNA-binding domain"/>
    <property type="match status" value="4"/>
</dbReference>
<dbReference type="HAMAP" id="MF_01114">
    <property type="entry name" value="RecX"/>
    <property type="match status" value="1"/>
</dbReference>
<dbReference type="InterPro" id="IPR053926">
    <property type="entry name" value="RecX_HTH_1st"/>
</dbReference>
<dbReference type="InterPro" id="IPR053924">
    <property type="entry name" value="RecX_HTH_2nd"/>
</dbReference>
<dbReference type="InterPro" id="IPR053925">
    <property type="entry name" value="RecX_HTH_3rd"/>
</dbReference>
<dbReference type="InterPro" id="IPR003783">
    <property type="entry name" value="Regulatory_RecX"/>
</dbReference>
<dbReference type="InterPro" id="IPR036388">
    <property type="entry name" value="WH-like_DNA-bd_sf"/>
</dbReference>
<dbReference type="NCBIfam" id="NF010733">
    <property type="entry name" value="PRK14135.1"/>
    <property type="match status" value="1"/>
</dbReference>
<dbReference type="PANTHER" id="PTHR33602">
    <property type="entry name" value="REGULATORY PROTEIN RECX FAMILY PROTEIN"/>
    <property type="match status" value="1"/>
</dbReference>
<dbReference type="PANTHER" id="PTHR33602:SF1">
    <property type="entry name" value="REGULATORY PROTEIN RECX FAMILY PROTEIN"/>
    <property type="match status" value="1"/>
</dbReference>
<dbReference type="Pfam" id="PF21982">
    <property type="entry name" value="RecX_HTH1"/>
    <property type="match status" value="1"/>
</dbReference>
<dbReference type="Pfam" id="PF02631">
    <property type="entry name" value="RecX_HTH2"/>
    <property type="match status" value="1"/>
</dbReference>
<dbReference type="Pfam" id="PF21981">
    <property type="entry name" value="RecX_HTH3"/>
    <property type="match status" value="1"/>
</dbReference>
<accession>A8AVW9</accession>
<sequence length="258" mass="30492">MKITKIEKKKRLYLLELDDSEKLYITEDTIVHFMLSRGMEITDQELSEIQDYAQFSYGKNLALYHLSFKQRTTKEVKDYLTRHDIQPETISQVLDNLKKDNWVNDRKYANSFIQSNLLTGDKGTFVLKQKLTQKGISSTIIEEELSQFDFTELTDKVAEKLLKKYQGKLPSKALQDKLLQSLINKGFSYSQAKTAYQHLDIEEDQENQEELLYKELDKQYRKYSKKYDGYDLKQRLTQALARKGYDYSDISSVLRDYF</sequence>
<reference key="1">
    <citation type="journal article" date="2007" name="J. Bacteriol.">
        <title>Genome-wide transcriptional changes in Streptococcus gordonii in response to competence signaling peptide.</title>
        <authorList>
            <person name="Vickerman M.M."/>
            <person name="Iobst S."/>
            <person name="Jesionowski A.M."/>
            <person name="Gill S.R."/>
        </authorList>
    </citation>
    <scope>NUCLEOTIDE SEQUENCE [LARGE SCALE GENOMIC DNA]</scope>
    <source>
        <strain>Challis / ATCC 35105 / BCRC 15272 / CH1 / DL1 / V288</strain>
    </source>
</reference>
<keyword id="KW-0963">Cytoplasm</keyword>
<keyword id="KW-1185">Reference proteome</keyword>
<evidence type="ECO:0000255" key="1">
    <source>
        <dbReference type="HAMAP-Rule" id="MF_01114"/>
    </source>
</evidence>
<comment type="function">
    <text evidence="1">Modulates RecA activity.</text>
</comment>
<comment type="subcellular location">
    <subcellularLocation>
        <location evidence="1">Cytoplasm</location>
    </subcellularLocation>
</comment>
<comment type="similarity">
    <text evidence="1">Belongs to the RecX family.</text>
</comment>
<feature type="chain" id="PRO_1000084993" description="Regulatory protein RecX">
    <location>
        <begin position="1"/>
        <end position="258"/>
    </location>
</feature>
<protein>
    <recommendedName>
        <fullName evidence="1">Regulatory protein RecX</fullName>
    </recommendedName>
</protein>
<name>RECX_STRGC</name>
<gene>
    <name evidence="1" type="primary">recX</name>
    <name type="ordered locus">SGO_0626</name>
</gene>